<name>COXM2_YEAST</name>
<proteinExistence type="evidence at protein level"/>
<accession>Q3E7A4</accession>
<accession>D6VPU0</accession>
<evidence type="ECO:0000250" key="1"/>
<evidence type="ECO:0000255" key="2">
    <source>
        <dbReference type="PROSITE-ProRule" id="PRU01150"/>
    </source>
</evidence>
<evidence type="ECO:0000269" key="3">
    <source>
    </source>
</evidence>
<evidence type="ECO:0000269" key="4">
    <source>
    </source>
</evidence>
<evidence type="ECO:0000269" key="5">
    <source>
    </source>
</evidence>
<evidence type="ECO:0000269" key="6">
    <source>
    </source>
</evidence>
<evidence type="ECO:0000305" key="7"/>
<gene>
    <name type="primary">CMC2</name>
    <name type="ordered locus">YBL059C-A</name>
</gene>
<dbReference type="EMBL" id="Z23261">
    <property type="status" value="NOT_ANNOTATED_CDS"/>
    <property type="molecule type" value="Genomic_DNA"/>
</dbReference>
<dbReference type="EMBL" id="Z35821">
    <property type="status" value="NOT_ANNOTATED_CDS"/>
    <property type="molecule type" value="Genomic_DNA"/>
</dbReference>
<dbReference type="EMBL" id="BK006936">
    <property type="protein sequence ID" value="DAA07060.1"/>
    <property type="molecule type" value="Genomic_DNA"/>
</dbReference>
<dbReference type="RefSeq" id="NP_031358.1">
    <property type="nucleotide sequence ID" value="NM_001184440.1"/>
</dbReference>
<dbReference type="SMR" id="Q3E7A4"/>
<dbReference type="BioGRID" id="32639">
    <property type="interactions" value="112"/>
</dbReference>
<dbReference type="FunCoup" id="Q3E7A4">
    <property type="interactions" value="117"/>
</dbReference>
<dbReference type="IntAct" id="Q3E7A4">
    <property type="interactions" value="3"/>
</dbReference>
<dbReference type="MINT" id="Q3E7A4"/>
<dbReference type="STRING" id="4932.YBL059C-A"/>
<dbReference type="PaxDb" id="4932-YBL059C-A"/>
<dbReference type="PeptideAtlas" id="Q3E7A4"/>
<dbReference type="EnsemblFungi" id="YBL059C-A_mRNA">
    <property type="protein sequence ID" value="YBL059C-A"/>
    <property type="gene ID" value="YBL059C-A"/>
</dbReference>
<dbReference type="GeneID" id="852220"/>
<dbReference type="KEGG" id="sce:YBL059C-A"/>
<dbReference type="AGR" id="SGD:S000007488"/>
<dbReference type="SGD" id="S000007488">
    <property type="gene designation" value="CMC2"/>
</dbReference>
<dbReference type="VEuPathDB" id="FungiDB:YBL059C-A"/>
<dbReference type="eggNOG" id="KOG4148">
    <property type="taxonomic scope" value="Eukaryota"/>
</dbReference>
<dbReference type="HOGENOM" id="CLU_169286_3_1_1"/>
<dbReference type="InParanoid" id="Q3E7A4"/>
<dbReference type="OMA" id="GMCNFEK"/>
<dbReference type="OrthoDB" id="532630at2759"/>
<dbReference type="BioCyc" id="YEAST:G3O-29248-MONOMER"/>
<dbReference type="BioGRID-ORCS" id="852220">
    <property type="hits" value="0 hits in 10 CRISPR screens"/>
</dbReference>
<dbReference type="PRO" id="PR:Q3E7A4"/>
<dbReference type="Proteomes" id="UP000002311">
    <property type="component" value="Chromosome II"/>
</dbReference>
<dbReference type="RNAct" id="Q3E7A4">
    <property type="molecule type" value="protein"/>
</dbReference>
<dbReference type="GO" id="GO:0005737">
    <property type="term" value="C:cytoplasm"/>
    <property type="evidence" value="ECO:0007005"/>
    <property type="project" value="SGD"/>
</dbReference>
<dbReference type="GO" id="GO:0005743">
    <property type="term" value="C:mitochondrial inner membrane"/>
    <property type="evidence" value="ECO:0007669"/>
    <property type="project" value="UniProtKB-SubCell"/>
</dbReference>
<dbReference type="GO" id="GO:0005758">
    <property type="term" value="C:mitochondrial intermembrane space"/>
    <property type="evidence" value="ECO:0000314"/>
    <property type="project" value="SGD"/>
</dbReference>
<dbReference type="GO" id="GO:0005739">
    <property type="term" value="C:mitochondrion"/>
    <property type="evidence" value="ECO:0007005"/>
    <property type="project" value="SGD"/>
</dbReference>
<dbReference type="GO" id="GO:0005634">
    <property type="term" value="C:nucleus"/>
    <property type="evidence" value="ECO:0007005"/>
    <property type="project" value="SGD"/>
</dbReference>
<dbReference type="GO" id="GO:0046872">
    <property type="term" value="F:metal ion binding"/>
    <property type="evidence" value="ECO:0007669"/>
    <property type="project" value="UniProtKB-KW"/>
</dbReference>
<dbReference type="GO" id="GO:0033617">
    <property type="term" value="P:mitochondrial cytochrome c oxidase assembly"/>
    <property type="evidence" value="ECO:0000315"/>
    <property type="project" value="FlyBase"/>
</dbReference>
<dbReference type="GO" id="GO:0033108">
    <property type="term" value="P:mitochondrial respiratory chain complex assembly"/>
    <property type="evidence" value="ECO:0000315"/>
    <property type="project" value="SGD"/>
</dbReference>
<dbReference type="InterPro" id="IPR013892">
    <property type="entry name" value="Cyt_c_biogenesis_Cmc1-like"/>
</dbReference>
<dbReference type="Pfam" id="PF08583">
    <property type="entry name" value="Cmc1"/>
    <property type="match status" value="1"/>
</dbReference>
<dbReference type="PROSITE" id="PS51808">
    <property type="entry name" value="CHCH"/>
    <property type="match status" value="1"/>
</dbReference>
<reference key="1">
    <citation type="journal article" date="1993" name="Yeast">
        <title>Sequencing and functional analysis of a 32,560 bp segment on the left arm of yeast chromosome II. Identification of 26 open reading frames, including the KIP1 and SEC17 genes.</title>
        <authorList>
            <person name="Scherens B."/>
            <person name="el Bakkoury M."/>
            <person name="Vierendeels F."/>
            <person name="Dubois E."/>
            <person name="Messenguy F."/>
        </authorList>
    </citation>
    <scope>NUCLEOTIDE SEQUENCE [GENOMIC DNA]</scope>
    <source>
        <strain>ATCC 204508 / S288c</strain>
    </source>
</reference>
<reference key="2">
    <citation type="journal article" date="1994" name="EMBO J.">
        <title>Complete DNA sequence of yeast chromosome II.</title>
        <authorList>
            <person name="Feldmann H."/>
            <person name="Aigle M."/>
            <person name="Aljinovic G."/>
            <person name="Andre B."/>
            <person name="Baclet M.C."/>
            <person name="Barthe C."/>
            <person name="Baur A."/>
            <person name="Becam A.-M."/>
            <person name="Biteau N."/>
            <person name="Boles E."/>
            <person name="Brandt T."/>
            <person name="Brendel M."/>
            <person name="Brueckner M."/>
            <person name="Bussereau F."/>
            <person name="Christiansen C."/>
            <person name="Contreras R."/>
            <person name="Crouzet M."/>
            <person name="Cziepluch C."/>
            <person name="Demolis N."/>
            <person name="Delaveau T."/>
            <person name="Doignon F."/>
            <person name="Domdey H."/>
            <person name="Duesterhus S."/>
            <person name="Dubois E."/>
            <person name="Dujon B."/>
            <person name="El Bakkoury M."/>
            <person name="Entian K.-D."/>
            <person name="Feuermann M."/>
            <person name="Fiers W."/>
            <person name="Fobo G.M."/>
            <person name="Fritz C."/>
            <person name="Gassenhuber J."/>
            <person name="Glansdorff N."/>
            <person name="Goffeau A."/>
            <person name="Grivell L.A."/>
            <person name="de Haan M."/>
            <person name="Hein C."/>
            <person name="Herbert C.J."/>
            <person name="Hollenberg C.P."/>
            <person name="Holmstroem K."/>
            <person name="Jacq C."/>
            <person name="Jacquet M."/>
            <person name="Jauniaux J.-C."/>
            <person name="Jonniaux J.-L."/>
            <person name="Kallesoee T."/>
            <person name="Kiesau P."/>
            <person name="Kirchrath L."/>
            <person name="Koetter P."/>
            <person name="Korol S."/>
            <person name="Liebl S."/>
            <person name="Logghe M."/>
            <person name="Lohan A.J.E."/>
            <person name="Louis E.J."/>
            <person name="Li Z.Y."/>
            <person name="Maat M.J."/>
            <person name="Mallet L."/>
            <person name="Mannhaupt G."/>
            <person name="Messenguy F."/>
            <person name="Miosga T."/>
            <person name="Molemans F."/>
            <person name="Mueller S."/>
            <person name="Nasr F."/>
            <person name="Obermaier B."/>
            <person name="Perea J."/>
            <person name="Pierard A."/>
            <person name="Piravandi E."/>
            <person name="Pohl F.M."/>
            <person name="Pohl T.M."/>
            <person name="Potier S."/>
            <person name="Proft M."/>
            <person name="Purnelle B."/>
            <person name="Ramezani Rad M."/>
            <person name="Rieger M."/>
            <person name="Rose M."/>
            <person name="Schaaff-Gerstenschlaeger I."/>
            <person name="Scherens B."/>
            <person name="Schwarzlose C."/>
            <person name="Skala J."/>
            <person name="Slonimski P.P."/>
            <person name="Smits P.H.M."/>
            <person name="Souciet J.-L."/>
            <person name="Steensma H.Y."/>
            <person name="Stucka R."/>
            <person name="Urrestarazu L.A."/>
            <person name="van der Aart Q.J.M."/>
            <person name="Van Dyck L."/>
            <person name="Vassarotti A."/>
            <person name="Vetter I."/>
            <person name="Vierendeels F."/>
            <person name="Vissers S."/>
            <person name="Wagner G."/>
            <person name="de Wergifosse P."/>
            <person name="Wolfe K.H."/>
            <person name="Zagulski M."/>
            <person name="Zimmermann F.K."/>
            <person name="Mewes H.-W."/>
            <person name="Kleine K."/>
        </authorList>
    </citation>
    <scope>NUCLEOTIDE SEQUENCE [LARGE SCALE GENOMIC DNA]</scope>
    <source>
        <strain>ATCC 204508 / S288c</strain>
    </source>
</reference>
<reference key="3">
    <citation type="journal article" date="2014" name="G3 (Bethesda)">
        <title>The reference genome sequence of Saccharomyces cerevisiae: Then and now.</title>
        <authorList>
            <person name="Engel S.R."/>
            <person name="Dietrich F.S."/>
            <person name="Fisk D.G."/>
            <person name="Binkley G."/>
            <person name="Balakrishnan R."/>
            <person name="Costanzo M.C."/>
            <person name="Dwight S.S."/>
            <person name="Hitz B.C."/>
            <person name="Karra K."/>
            <person name="Nash R.S."/>
            <person name="Weng S."/>
            <person name="Wong E.D."/>
            <person name="Lloyd P."/>
            <person name="Skrzypek M.S."/>
            <person name="Miyasato S.R."/>
            <person name="Simison M."/>
            <person name="Cherry J.M."/>
        </authorList>
    </citation>
    <scope>GENOME REANNOTATION</scope>
    <source>
        <strain>ATCC 204508 / S288c</strain>
    </source>
</reference>
<reference key="4">
    <citation type="journal article" date="2003" name="Nature">
        <title>Global analysis of protein expression in yeast.</title>
        <authorList>
            <person name="Ghaemmaghami S."/>
            <person name="Huh W.-K."/>
            <person name="Bower K."/>
            <person name="Howson R.W."/>
            <person name="Belle A."/>
            <person name="Dephoure N."/>
            <person name="O'Shea E.K."/>
            <person name="Weissman J.S."/>
        </authorList>
    </citation>
    <scope>LEVEL OF PROTEIN EXPRESSION [LARGE SCALE ANALYSIS]</scope>
</reference>
<reference key="5">
    <citation type="journal article" date="2009" name="J. Mol. Biol.">
        <title>Systematic analysis of the twin cx(9)c protein family.</title>
        <authorList>
            <person name="Longen S."/>
            <person name="Bien M."/>
            <person name="Bihlmaier K."/>
            <person name="Kloeppel C."/>
            <person name="Kauff F."/>
            <person name="Hammermeister M."/>
            <person name="Westermann B."/>
            <person name="Herrmann J.M."/>
            <person name="Riemer J."/>
        </authorList>
    </citation>
    <scope>FUNCTION</scope>
    <scope>SUBCELLULAR LOCATION</scope>
</reference>
<reference key="6">
    <citation type="journal article" date="2010" name="J. Biol. Chem.">
        <title>The conserved mitochondrial twin Cx9C protein Cmc2 Is a Cmc1 homologue essential for cytochrome c oxidase biogenesis.</title>
        <authorList>
            <person name="Horn D."/>
            <person name="Zhou W."/>
            <person name="Trevisson E."/>
            <person name="Al-Ali H."/>
            <person name="Harris T.K."/>
            <person name="Salviati L."/>
            <person name="Barrientos A."/>
        </authorList>
    </citation>
    <scope>FUNCTION</scope>
    <scope>SUBCELLULAR LOCATION</scope>
    <scope>INTERACTION WITH CMC1</scope>
</reference>
<reference key="7">
    <citation type="journal article" date="2012" name="Mol. Cell. Proteomics">
        <title>Intermembrane space proteome of yeast mitochondria.</title>
        <authorList>
            <person name="Voegtle F.N."/>
            <person name="Burkhart J.M."/>
            <person name="Rao S."/>
            <person name="Gerbeth C."/>
            <person name="Hinrichs J."/>
            <person name="Martinou J.C."/>
            <person name="Chacinska A."/>
            <person name="Sickmann A."/>
            <person name="Zahedi R.P."/>
            <person name="Meisinger C."/>
        </authorList>
    </citation>
    <scope>IDENTIFICATION BY MASS SPECTROMETRY</scope>
    <scope>SUBCELLULAR LOCATION [LARGE SCALE ANALYSIS]</scope>
</reference>
<reference key="8">
    <citation type="journal article" date="2012" name="Proc. Natl. Acad. Sci. U.S.A.">
        <title>N-terminal acetylome analyses and functional insights of the N-terminal acetyltransferase NatB.</title>
        <authorList>
            <person name="Van Damme P."/>
            <person name="Lasa M."/>
            <person name="Polevoda B."/>
            <person name="Gazquez C."/>
            <person name="Elosegui-Artola A."/>
            <person name="Kim D.S."/>
            <person name="De Juan-Pardo E."/>
            <person name="Demeyer K."/>
            <person name="Hole K."/>
            <person name="Larrea E."/>
            <person name="Timmerman E."/>
            <person name="Prieto J."/>
            <person name="Arnesen T."/>
            <person name="Sherman F."/>
            <person name="Gevaert K."/>
            <person name="Aldabe R."/>
        </authorList>
    </citation>
    <scope>IDENTIFICATION BY MASS SPECTROMETRY [LARGE SCALE ANALYSIS]</scope>
</reference>
<comment type="function">
    <text evidence="4 5">Required for mitochondrial cytochrome c oxidase (COX) assembly and respiration. May be involved in copper trafficking and distribution to mitochondrial COX and SOD1.</text>
</comment>
<comment type="subunit">
    <text evidence="5">Interacts with CMC1.</text>
</comment>
<comment type="subcellular location">
    <subcellularLocation>
        <location evidence="4 5">Mitochondrion inner membrane</location>
        <topology evidence="4 5">Peripheral membrane protein</topology>
        <orientation evidence="4 5">Intermembrane side</orientation>
    </subcellularLocation>
    <subcellularLocation>
        <location evidence="6">Mitochondrion intermembrane space</location>
    </subcellularLocation>
    <text>Imported into the mitochondria via the mitochondrial MIA40-ERV1 machinery.</text>
</comment>
<comment type="domain">
    <text evidence="1">The twin Cx9C motifs are involved in the recognition by the mitochondrial MIA40-ERV1 disulfide relay system and the subsequent transfer of disulfide bonds by dithiol/disulfide exchange reactions to the newly imported protein.</text>
</comment>
<comment type="miscellaneous">
    <text evidence="3">Present with 279 molecules/cell in log phase SD medium.</text>
</comment>
<comment type="similarity">
    <text evidence="7">Belongs to the CMC family.</text>
</comment>
<sequence length="109" mass="12947">MHPQLEAERFHSCLDFINALDKCHQKEYYKRIFGLCNNEKDALNKCLKEASLNNKKRAVIESRIKRADVEKRWKKIEEEEYGEDAILKTILDRQYAKKKQESDNDANSK</sequence>
<protein>
    <recommendedName>
        <fullName>COX assembly mitochondrial protein 2</fullName>
    </recommendedName>
    <alternativeName>
        <fullName>Cx9C motif-containing protein 2</fullName>
    </alternativeName>
    <alternativeName>
        <fullName>Mitochondrial metallochaperone-like protein CMC2</fullName>
    </alternativeName>
</protein>
<feature type="chain" id="PRO_0000248414" description="COX assembly mitochondrial protein 2">
    <location>
        <begin position="1"/>
        <end position="109"/>
    </location>
</feature>
<feature type="domain" description="CHCH" evidence="2">
    <location>
        <begin position="10"/>
        <end position="54"/>
    </location>
</feature>
<feature type="short sequence motif" description="Cx9C motif 1" evidence="2">
    <location>
        <begin position="13"/>
        <end position="23"/>
    </location>
</feature>
<feature type="short sequence motif" description="Cx9C motif 2" evidence="2">
    <location>
        <begin position="36"/>
        <end position="46"/>
    </location>
</feature>
<feature type="disulfide bond" evidence="2">
    <location>
        <begin position="13"/>
        <end position="46"/>
    </location>
</feature>
<feature type="disulfide bond" evidence="2">
    <location>
        <begin position="23"/>
        <end position="36"/>
    </location>
</feature>
<keyword id="KW-0143">Chaperone</keyword>
<keyword id="KW-0186">Copper</keyword>
<keyword id="KW-1015">Disulfide bond</keyword>
<keyword id="KW-0472">Membrane</keyword>
<keyword id="KW-0479">Metal-binding</keyword>
<keyword id="KW-0496">Mitochondrion</keyword>
<keyword id="KW-0999">Mitochondrion inner membrane</keyword>
<keyword id="KW-1185">Reference proteome</keyword>
<keyword id="KW-0677">Repeat</keyword>
<organism>
    <name type="scientific">Saccharomyces cerevisiae (strain ATCC 204508 / S288c)</name>
    <name type="common">Baker's yeast</name>
    <dbReference type="NCBI Taxonomy" id="559292"/>
    <lineage>
        <taxon>Eukaryota</taxon>
        <taxon>Fungi</taxon>
        <taxon>Dikarya</taxon>
        <taxon>Ascomycota</taxon>
        <taxon>Saccharomycotina</taxon>
        <taxon>Saccharomycetes</taxon>
        <taxon>Saccharomycetales</taxon>
        <taxon>Saccharomycetaceae</taxon>
        <taxon>Saccharomyces</taxon>
    </lineage>
</organism>